<name>RPOZ_YERPP</name>
<protein>
    <recommendedName>
        <fullName evidence="1">DNA-directed RNA polymerase subunit omega</fullName>
        <shortName evidence="1">RNAP omega subunit</shortName>
        <ecNumber evidence="1">2.7.7.6</ecNumber>
    </recommendedName>
    <alternativeName>
        <fullName evidence="1">RNA polymerase omega subunit</fullName>
    </alternativeName>
    <alternativeName>
        <fullName evidence="1">Transcriptase subunit omega</fullName>
    </alternativeName>
</protein>
<reference key="1">
    <citation type="submission" date="2007-02" db="EMBL/GenBank/DDBJ databases">
        <title>Complete sequence of chromosome of Yersinia pestis Pestoides F.</title>
        <authorList>
            <consortium name="US DOE Joint Genome Institute"/>
            <person name="Copeland A."/>
            <person name="Lucas S."/>
            <person name="Lapidus A."/>
            <person name="Barry K."/>
            <person name="Detter J.C."/>
            <person name="Glavina del Rio T."/>
            <person name="Hammon N."/>
            <person name="Israni S."/>
            <person name="Dalin E."/>
            <person name="Tice H."/>
            <person name="Pitluck S."/>
            <person name="Di Bartolo G."/>
            <person name="Chain P."/>
            <person name="Malfatti S."/>
            <person name="Shin M."/>
            <person name="Vergez L."/>
            <person name="Schmutz J."/>
            <person name="Larimer F."/>
            <person name="Land M."/>
            <person name="Hauser L."/>
            <person name="Worsham P."/>
            <person name="Chu M."/>
            <person name="Bearden S."/>
            <person name="Garcia E."/>
            <person name="Richardson P."/>
        </authorList>
    </citation>
    <scope>NUCLEOTIDE SEQUENCE [LARGE SCALE GENOMIC DNA]</scope>
    <source>
        <strain>Pestoides F</strain>
    </source>
</reference>
<keyword id="KW-0240">DNA-directed RNA polymerase</keyword>
<keyword id="KW-0548">Nucleotidyltransferase</keyword>
<keyword id="KW-0804">Transcription</keyword>
<keyword id="KW-0808">Transferase</keyword>
<evidence type="ECO:0000255" key="1">
    <source>
        <dbReference type="HAMAP-Rule" id="MF_00366"/>
    </source>
</evidence>
<dbReference type="EC" id="2.7.7.6" evidence="1"/>
<dbReference type="EMBL" id="CP000668">
    <property type="protein sequence ID" value="ABP42209.1"/>
    <property type="molecule type" value="Genomic_DNA"/>
</dbReference>
<dbReference type="RefSeq" id="WP_011906474.1">
    <property type="nucleotide sequence ID" value="NZ_CP009715.1"/>
</dbReference>
<dbReference type="SMR" id="A4TSE7"/>
<dbReference type="KEGG" id="ypp:YPDSF_3866"/>
<dbReference type="PATRIC" id="fig|386656.14.peg.652"/>
<dbReference type="GO" id="GO:0000428">
    <property type="term" value="C:DNA-directed RNA polymerase complex"/>
    <property type="evidence" value="ECO:0007669"/>
    <property type="project" value="UniProtKB-KW"/>
</dbReference>
<dbReference type="GO" id="GO:0003677">
    <property type="term" value="F:DNA binding"/>
    <property type="evidence" value="ECO:0007669"/>
    <property type="project" value="UniProtKB-UniRule"/>
</dbReference>
<dbReference type="GO" id="GO:0003899">
    <property type="term" value="F:DNA-directed RNA polymerase activity"/>
    <property type="evidence" value="ECO:0007669"/>
    <property type="project" value="UniProtKB-UniRule"/>
</dbReference>
<dbReference type="GO" id="GO:0006351">
    <property type="term" value="P:DNA-templated transcription"/>
    <property type="evidence" value="ECO:0007669"/>
    <property type="project" value="UniProtKB-UniRule"/>
</dbReference>
<dbReference type="Gene3D" id="3.90.940.10">
    <property type="match status" value="1"/>
</dbReference>
<dbReference type="HAMAP" id="MF_00366">
    <property type="entry name" value="RNApol_bact_RpoZ"/>
    <property type="match status" value="1"/>
</dbReference>
<dbReference type="InterPro" id="IPR003716">
    <property type="entry name" value="DNA-dir_RNA_pol_omega"/>
</dbReference>
<dbReference type="InterPro" id="IPR006110">
    <property type="entry name" value="Pol_omega/Rpo6/RPB6"/>
</dbReference>
<dbReference type="InterPro" id="IPR036161">
    <property type="entry name" value="RPB6/omega-like_sf"/>
</dbReference>
<dbReference type="NCBIfam" id="TIGR00690">
    <property type="entry name" value="rpoZ"/>
    <property type="match status" value="1"/>
</dbReference>
<dbReference type="PANTHER" id="PTHR34476">
    <property type="entry name" value="DNA-DIRECTED RNA POLYMERASE SUBUNIT OMEGA"/>
    <property type="match status" value="1"/>
</dbReference>
<dbReference type="PANTHER" id="PTHR34476:SF1">
    <property type="entry name" value="DNA-DIRECTED RNA POLYMERASE SUBUNIT OMEGA"/>
    <property type="match status" value="1"/>
</dbReference>
<dbReference type="Pfam" id="PF01192">
    <property type="entry name" value="RNA_pol_Rpb6"/>
    <property type="match status" value="1"/>
</dbReference>
<dbReference type="SMART" id="SM01409">
    <property type="entry name" value="RNA_pol_Rpb6"/>
    <property type="match status" value="1"/>
</dbReference>
<dbReference type="SUPFAM" id="SSF63562">
    <property type="entry name" value="RPB6/omega subunit-like"/>
    <property type="match status" value="1"/>
</dbReference>
<proteinExistence type="inferred from homology"/>
<feature type="chain" id="PRO_1000006041" description="DNA-directed RNA polymerase subunit omega">
    <location>
        <begin position="1"/>
        <end position="88"/>
    </location>
</feature>
<sequence>MARVTVQDAVEKIGNRFDLVLVAARRARQIQSGGKDALVPEENDKVTVIALREIEEGLITNQILDVRERQEQQAAEIQAVTAIAEGRR</sequence>
<organism>
    <name type="scientific">Yersinia pestis (strain Pestoides F)</name>
    <dbReference type="NCBI Taxonomy" id="386656"/>
    <lineage>
        <taxon>Bacteria</taxon>
        <taxon>Pseudomonadati</taxon>
        <taxon>Pseudomonadota</taxon>
        <taxon>Gammaproteobacteria</taxon>
        <taxon>Enterobacterales</taxon>
        <taxon>Yersiniaceae</taxon>
        <taxon>Yersinia</taxon>
    </lineage>
</organism>
<comment type="function">
    <text evidence="1">Promotes RNA polymerase assembly. Latches the N- and C-terminal regions of the beta' subunit thereby facilitating its interaction with the beta and alpha subunits.</text>
</comment>
<comment type="catalytic activity">
    <reaction evidence="1">
        <text>RNA(n) + a ribonucleoside 5'-triphosphate = RNA(n+1) + diphosphate</text>
        <dbReference type="Rhea" id="RHEA:21248"/>
        <dbReference type="Rhea" id="RHEA-COMP:14527"/>
        <dbReference type="Rhea" id="RHEA-COMP:17342"/>
        <dbReference type="ChEBI" id="CHEBI:33019"/>
        <dbReference type="ChEBI" id="CHEBI:61557"/>
        <dbReference type="ChEBI" id="CHEBI:140395"/>
        <dbReference type="EC" id="2.7.7.6"/>
    </reaction>
</comment>
<comment type="subunit">
    <text evidence="1">The RNAP catalytic core consists of 2 alpha, 1 beta, 1 beta' and 1 omega subunit. When a sigma factor is associated with the core the holoenzyme is formed, which can initiate transcription.</text>
</comment>
<comment type="similarity">
    <text evidence="1">Belongs to the RNA polymerase subunit omega family.</text>
</comment>
<gene>
    <name evidence="1" type="primary">rpoZ</name>
    <name type="ordered locus">YPDSF_3866</name>
</gene>
<accession>A4TSE7</accession>